<keyword id="KW-0150">Chloroplast</keyword>
<keyword id="KW-0472">Membrane</keyword>
<keyword id="KW-0934">Plastid</keyword>
<keyword id="KW-0808">Transferase</keyword>
<keyword id="KW-0809">Transit peptide</keyword>
<keyword id="KW-0812">Transmembrane</keyword>
<keyword id="KW-1133">Transmembrane helix</keyword>
<feature type="transit peptide" description="Chloroplast" evidence="1">
    <location>
        <begin position="1"/>
        <end position="91"/>
    </location>
</feature>
<feature type="chain" id="PRO_0000439226" description="2-acylphloroglucinol 4-prenyltransferase, chloroplastic" evidence="1">
    <location>
        <begin position="92"/>
        <end position="411"/>
    </location>
</feature>
<feature type="transmembrane region" description="Helical" evidence="1">
    <location>
        <begin position="159"/>
        <end position="179"/>
    </location>
</feature>
<feature type="transmembrane region" description="Helical" evidence="1">
    <location>
        <begin position="198"/>
        <end position="218"/>
    </location>
</feature>
<feature type="transmembrane region" description="Helical" evidence="1">
    <location>
        <begin position="226"/>
        <end position="246"/>
    </location>
</feature>
<feature type="transmembrane region" description="Helical" evidence="1">
    <location>
        <begin position="253"/>
        <end position="273"/>
    </location>
</feature>
<feature type="transmembrane region" description="Helical" evidence="1">
    <location>
        <begin position="278"/>
        <end position="298"/>
    </location>
</feature>
<feature type="transmembrane region" description="Helical" evidence="1">
    <location>
        <begin position="333"/>
        <end position="353"/>
    </location>
</feature>
<feature type="transmembrane region" description="Helical" evidence="1">
    <location>
        <begin position="356"/>
        <end position="376"/>
    </location>
</feature>
<feature type="transmembrane region" description="Helical" evidence="1">
    <location>
        <begin position="391"/>
        <end position="411"/>
    </location>
</feature>
<accession>E5RP65</accession>
<proteinExistence type="evidence at protein level"/>
<dbReference type="EC" id="2.5.1.136" evidence="2"/>
<dbReference type="EMBL" id="AB543053">
    <property type="protein sequence ID" value="BAJ61049.1"/>
    <property type="molecule type" value="mRNA"/>
</dbReference>
<dbReference type="SMR" id="E5RP65"/>
<dbReference type="KEGG" id="ag:BAJ61049"/>
<dbReference type="BRENDA" id="2.5.1.136">
    <property type="organism ID" value="2716"/>
</dbReference>
<dbReference type="GO" id="GO:0031969">
    <property type="term" value="C:chloroplast membrane"/>
    <property type="evidence" value="ECO:0007669"/>
    <property type="project" value="UniProtKB-SubCell"/>
</dbReference>
<dbReference type="GO" id="GO:0004659">
    <property type="term" value="F:prenyltransferase activity"/>
    <property type="evidence" value="ECO:0007669"/>
    <property type="project" value="InterPro"/>
</dbReference>
<dbReference type="CDD" id="cd13960">
    <property type="entry name" value="PT_UbiA_HPT1"/>
    <property type="match status" value="1"/>
</dbReference>
<dbReference type="Gene3D" id="1.10.357.140">
    <property type="entry name" value="UbiA prenyltransferase"/>
    <property type="match status" value="1"/>
</dbReference>
<dbReference type="InterPro" id="IPR044502">
    <property type="entry name" value="AtHST-like"/>
</dbReference>
<dbReference type="InterPro" id="IPR000537">
    <property type="entry name" value="UbiA_prenyltransferase"/>
</dbReference>
<dbReference type="InterPro" id="IPR044878">
    <property type="entry name" value="UbiA_sf"/>
</dbReference>
<dbReference type="PANTHER" id="PTHR43009">
    <property type="entry name" value="HOMOGENTISATE SOLANESYLTRANSFERASE, CHLOROPLASTIC"/>
    <property type="match status" value="1"/>
</dbReference>
<dbReference type="PANTHER" id="PTHR43009:SF10">
    <property type="entry name" value="HOMOGENTISATE SOLANESYLTRANSFERASE, CHLOROPLASTIC"/>
    <property type="match status" value="1"/>
</dbReference>
<dbReference type="Pfam" id="PF01040">
    <property type="entry name" value="UbiA"/>
    <property type="match status" value="1"/>
</dbReference>
<evidence type="ECO:0000255" key="1"/>
<evidence type="ECO:0000269" key="2">
    <source>
    </source>
</evidence>
<evidence type="ECO:0000269" key="3">
    <source ref="1"/>
</evidence>
<evidence type="ECO:0000269" key="4">
    <source ref="2"/>
</evidence>
<evidence type="ECO:0000303" key="5">
    <source ref="1"/>
</evidence>
<evidence type="ECO:0000305" key="6"/>
<evidence type="ECO:0000305" key="7">
    <source>
    </source>
</evidence>
<organism>
    <name type="scientific">Humulus lupulus</name>
    <name type="common">European hop</name>
    <dbReference type="NCBI Taxonomy" id="3486"/>
    <lineage>
        <taxon>Eukaryota</taxon>
        <taxon>Viridiplantae</taxon>
        <taxon>Streptophyta</taxon>
        <taxon>Embryophyta</taxon>
        <taxon>Tracheophyta</taxon>
        <taxon>Spermatophyta</taxon>
        <taxon>Magnoliopsida</taxon>
        <taxon>eudicotyledons</taxon>
        <taxon>Gunneridae</taxon>
        <taxon>Pentapetalae</taxon>
        <taxon>rosids</taxon>
        <taxon>fabids</taxon>
        <taxon>Rosales</taxon>
        <taxon>Cannabaceae</taxon>
        <taxon>Humulus</taxon>
    </lineage>
</organism>
<name>PT1_HUMLU</name>
<comment type="function">
    <text evidence="2 4 7">Involved in the biosynthesis of prenylated phenolics natural products which contribute to the bitter taste of beer and display broad biological activities (Probable). Catalyzes the first prenylation step in the beta-bitter acid pathway (PubMed:22166201, Ref.2). Abble to transfer dimethylallyl diphosphate (DMAPP) or geranyl diphosphate (GPP) to phlorisovalerophenone (PIVP), phlorisobutrylphenone (PIMP) and naringenin chalcone (Ref.2). Can also use phlorisobutyrophenone (PIBP) and phlormethylbutanophenone (PMBP) as substrates, but not 6'-O-methylated chalcone or naringenin (PubMed:22166201).</text>
</comment>
<comment type="catalytic activity">
    <reaction evidence="2">
        <text>a 2-acylphloroglucinol + dimethylallyl diphosphate = a 2-acyl-4-prenylphloroglucinol + diphosphate</text>
        <dbReference type="Rhea" id="RHEA:51752"/>
        <dbReference type="ChEBI" id="CHEBI:33019"/>
        <dbReference type="ChEBI" id="CHEBI:57623"/>
        <dbReference type="ChEBI" id="CHEBI:134371"/>
        <dbReference type="ChEBI" id="CHEBI:134386"/>
        <dbReference type="EC" id="2.5.1.136"/>
    </reaction>
</comment>
<comment type="cofactor">
    <cofactor evidence="2">
        <name>Mg(2+)</name>
        <dbReference type="ChEBI" id="CHEBI:18420"/>
    </cofactor>
    <text>Cannot be substituted by Mn(2+) or Zn(2+).</text>
</comment>
<comment type="biophysicochemical properties">
    <kinetics>
        <KM evidence="2">59.5 uM for phlorisovalerophenone</KM>
    </kinetics>
    <phDependence>
        <text evidence="2">Optimum pH is 7.0.</text>
    </phDependence>
</comment>
<comment type="pathway">
    <text evidence="7">Secondary metabolite biosynthesis.</text>
</comment>
<comment type="subcellular location">
    <subcellularLocation>
        <location evidence="3">Plastid</location>
    </subcellularLocation>
    <subcellularLocation>
        <location evidence="1">Plastid</location>
        <location evidence="1">Chloroplast membrane</location>
        <topology evidence="1">Multi-pass membrane protein</topology>
    </subcellularLocation>
</comment>
<comment type="tissue specificity">
    <text evidence="3">Expressed in glandular trichomes called lupulin glands, and in early stage and mature cones. Detected in leaves, but not in root, stem and first stage of flowers. No expression in male flowers.</text>
</comment>
<comment type="similarity">
    <text evidence="6">Belongs to the UbiA prenyltransferase family.</text>
</comment>
<protein>
    <recommendedName>
        <fullName evidence="6">2-acylphloroglucinol 4-prenyltransferase, chloroplastic</fullName>
        <ecNumber evidence="2">2.5.1.136</ecNumber>
    </recommendedName>
    <alternativeName>
        <fullName evidence="5">Aromatic prenyltransferase PT1</fullName>
    </alternativeName>
    <alternativeName>
        <fullName evidence="5">Humulus lupulus prenyltransferase-1</fullName>
        <shortName evidence="5">HlPT-1</shortName>
    </alternativeName>
</protein>
<sequence>MELSSVSSFSLGTNPFISIPHNNNNLKVSSYCCKSKSRVINSTNSKHCSPNNNNNTSNKTTHLLGLYGQSRCLLKPLSFISCNDQRGNSIRASAQIEDRPPESGNLSALTNVKDFVSVCWEYVRPYTAKGVIICSSCLFGRELLENPNLFSRPLIFRALLGMLAILGSCFYTAGINQIFDMDIDRINKPDLPLVSGRISVESAWLLTLSPAIIGFILILKLNSGPLLTSLYCLAILSGTIYSVPPFRWKKNPITAFLCILMIHAGLNFSVYYASRAALGLAFAWSPSFSFITAFITFMTLTLASSKDLSDINGDRKFGVETFATKLGAKNITLLGTGLLLLNYVAAISTAIIWPKAFKSNIMLLSHAILAFSLIFQARELDRTNYTPEACKSFYEFIWILFSAEYVVYLFI</sequence>
<reference key="1">
    <citation type="journal article" date="2010" name="Plant Biotechnol. (Sheffield)">
        <title>An aromatic prenyltransferase-like gene HlPT-1 preferentially expressed in lupulin glands of hop.</title>
        <authorList>
            <person name="Tsurumaru Y."/>
            <person name="Sasaki K."/>
            <person name="Miyawaki T."/>
            <person name="Momma T."/>
            <person name="Umemoto N."/>
            <person name="Yazaki K."/>
        </authorList>
    </citation>
    <scope>NUCLEOTIDE SEQUENCE [MRNA]</scope>
    <scope>TISSUE SPECIFICITY</scope>
    <scope>SUBCELLULAR LOCATION</scope>
    <source>
        <strain>cv. Kirin II</strain>
        <tissue>Lupulin gland</tissue>
    </source>
</reference>
<reference key="2">
    <citation type="patent" date="2009-09-24" number="WO2009114939">
        <title>Aromatic prenyltransferase from hop.</title>
        <authorList>
            <person name="Page J."/>
            <person name="Liu E."/>
            <person name="Nagel J."/>
        </authorList>
    </citation>
    <scope>FUNCTION</scope>
</reference>
<reference key="3">
    <citation type="journal article" date="2012" name="Biochem. Biophys. Res. Commun.">
        <title>HlPT-1, a membrane-bound prenyltransferase responsible for the biosynthesis of bitter acids in hops.</title>
        <authorList>
            <person name="Tsurumaru Y."/>
            <person name="Sasaki K."/>
            <person name="Miyawaki T."/>
            <person name="Uto Y."/>
            <person name="Momma T."/>
            <person name="Umemoto N."/>
            <person name="Momose M."/>
            <person name="Yazaki K."/>
        </authorList>
    </citation>
    <scope>FUNCTION</scope>
    <scope>CATALYTIC ACTIVITY</scope>
    <scope>SUBSTRATE SPECIFICITY</scope>
    <scope>BIOPHYSICOCHEMICAL PROPERTIES</scope>
    <scope>COFACTOR</scope>
    <scope>PATHWAY</scope>
</reference>
<reference key="4">
    <citation type="journal article" date="2019" name="Nat. Prod. Rep.">
        <title>Non-volatile natural products in plant glandular trichomes: chemistry, biological activities and biosynthesis.</title>
        <authorList>
            <person name="Liu Y."/>
            <person name="Jing S.-X."/>
            <person name="Luo S.-H."/>
            <person name="Li S.-H."/>
        </authorList>
    </citation>
    <scope>PATHWAY</scope>
    <scope>REVIEW</scope>
</reference>